<comment type="function">
    <text evidence="1">Serine/threonine-protein kinase that plays a central role in centriole duplication. Able to trigger procentriole formation on the surface of the mother centriole cylinder, using mother centriole as a platform, leading to the recruitment of centriole biogenesis proteins such as sas-6. When overexpressed, it is able to induce centrosome amplification through the simultaneous generation of multiple procentrioles adjoining each parental centriole during S phase. Centrosome amplification following overexpression can initiate tumorigenesis, highlighting the importance of centrosome regulation in cancers (By similarity).</text>
</comment>
<comment type="catalytic activity">
    <reaction>
        <text>L-seryl-[protein] + ATP = O-phospho-L-seryl-[protein] + ADP + H(+)</text>
        <dbReference type="Rhea" id="RHEA:17989"/>
        <dbReference type="Rhea" id="RHEA-COMP:9863"/>
        <dbReference type="Rhea" id="RHEA-COMP:11604"/>
        <dbReference type="ChEBI" id="CHEBI:15378"/>
        <dbReference type="ChEBI" id="CHEBI:29999"/>
        <dbReference type="ChEBI" id="CHEBI:30616"/>
        <dbReference type="ChEBI" id="CHEBI:83421"/>
        <dbReference type="ChEBI" id="CHEBI:456216"/>
        <dbReference type="EC" id="2.7.11.21"/>
    </reaction>
</comment>
<comment type="catalytic activity">
    <reaction>
        <text>L-threonyl-[protein] + ATP = O-phospho-L-threonyl-[protein] + ADP + H(+)</text>
        <dbReference type="Rhea" id="RHEA:46608"/>
        <dbReference type="Rhea" id="RHEA-COMP:11060"/>
        <dbReference type="Rhea" id="RHEA-COMP:11605"/>
        <dbReference type="ChEBI" id="CHEBI:15378"/>
        <dbReference type="ChEBI" id="CHEBI:30013"/>
        <dbReference type="ChEBI" id="CHEBI:30616"/>
        <dbReference type="ChEBI" id="CHEBI:61977"/>
        <dbReference type="ChEBI" id="CHEBI:456216"/>
        <dbReference type="EC" id="2.7.11.21"/>
    </reaction>
</comment>
<comment type="subunit">
    <text evidence="1">Homodimer.</text>
</comment>
<comment type="subcellular location">
    <subcellularLocation>
        <location evidence="1">Cytoplasm</location>
        <location evidence="1">Cytoskeleton</location>
        <location evidence="1">Microtubule organizing center</location>
        <location evidence="1">Centrosome</location>
        <location evidence="1">Centriole</location>
    </subcellularLocation>
</comment>
<comment type="PTM">
    <text evidence="1">Ubiquitinated by the SCF(Slimb) ubiquitin ligase complex; leading to its degradation by the proteasome during interphase and regulating centriole number and ensuring the block to centriole reduplication.</text>
</comment>
<comment type="similarity">
    <text evidence="3 4 5">Belongs to the protein kinase superfamily. Ser/Thr protein kinase family. CDC5/Polo subfamily.</text>
</comment>
<keyword id="KW-0067">ATP-binding</keyword>
<keyword id="KW-0963">Cytoplasm</keyword>
<keyword id="KW-0206">Cytoskeleton</keyword>
<keyword id="KW-0418">Kinase</keyword>
<keyword id="KW-0547">Nucleotide-binding</keyword>
<keyword id="KW-1185">Reference proteome</keyword>
<keyword id="KW-0723">Serine/threonine-protein kinase</keyword>
<keyword id="KW-0808">Transferase</keyword>
<keyword id="KW-0832">Ubl conjugation</keyword>
<gene>
    <name type="primary">SAK</name>
    <name type="ORF">GA20166</name>
</gene>
<organism>
    <name type="scientific">Drosophila pseudoobscura pseudoobscura</name>
    <name type="common">Fruit fly</name>
    <dbReference type="NCBI Taxonomy" id="46245"/>
    <lineage>
        <taxon>Eukaryota</taxon>
        <taxon>Metazoa</taxon>
        <taxon>Ecdysozoa</taxon>
        <taxon>Arthropoda</taxon>
        <taxon>Hexapoda</taxon>
        <taxon>Insecta</taxon>
        <taxon>Pterygota</taxon>
        <taxon>Neoptera</taxon>
        <taxon>Endopterygota</taxon>
        <taxon>Diptera</taxon>
        <taxon>Brachycera</taxon>
        <taxon>Muscomorpha</taxon>
        <taxon>Ephydroidea</taxon>
        <taxon>Drosophilidae</taxon>
        <taxon>Drosophila</taxon>
        <taxon>Sophophora</taxon>
    </lineage>
</organism>
<accession>Q2LYK3</accession>
<proteinExistence type="inferred from homology"/>
<protein>
    <recommendedName>
        <fullName>Serine/threonine-protein kinase PLK4</fullName>
        <ecNumber>2.7.11.21</ecNumber>
    </recommendedName>
    <alternativeName>
        <fullName>Polo-like kinase 4</fullName>
        <shortName>PLK-4</shortName>
    </alternativeName>
    <alternativeName>
        <fullName>Serine/threonine-protein kinase SAK</fullName>
    </alternativeName>
</protein>
<reference key="1">
    <citation type="journal article" date="2005" name="Genome Res.">
        <title>Comparative genome sequencing of Drosophila pseudoobscura: chromosomal, gene, and cis-element evolution.</title>
        <authorList>
            <person name="Richards S."/>
            <person name="Liu Y."/>
            <person name="Bettencourt B.R."/>
            <person name="Hradecky P."/>
            <person name="Letovsky S."/>
            <person name="Nielsen R."/>
            <person name="Thornton K."/>
            <person name="Hubisz M.J."/>
            <person name="Chen R."/>
            <person name="Meisel R.P."/>
            <person name="Couronne O."/>
            <person name="Hua S."/>
            <person name="Smith M.A."/>
            <person name="Zhang P."/>
            <person name="Liu J."/>
            <person name="Bussemaker H.J."/>
            <person name="van Batenburg M.F."/>
            <person name="Howells S.L."/>
            <person name="Scherer S.E."/>
            <person name="Sodergren E."/>
            <person name="Matthews B.B."/>
            <person name="Crosby M.A."/>
            <person name="Schroeder A.J."/>
            <person name="Ortiz-Barrientos D."/>
            <person name="Rives C.M."/>
            <person name="Metzker M.L."/>
            <person name="Muzny D.M."/>
            <person name="Scott G."/>
            <person name="Steffen D."/>
            <person name="Wheeler D.A."/>
            <person name="Worley K.C."/>
            <person name="Havlak P."/>
            <person name="Durbin K.J."/>
            <person name="Egan A."/>
            <person name="Gill R."/>
            <person name="Hume J."/>
            <person name="Morgan M.B."/>
            <person name="Miner G."/>
            <person name="Hamilton C."/>
            <person name="Huang Y."/>
            <person name="Waldron L."/>
            <person name="Verduzco D."/>
            <person name="Clerc-Blankenburg K.P."/>
            <person name="Dubchak I."/>
            <person name="Noor M.A.F."/>
            <person name="Anderson W."/>
            <person name="White K.P."/>
            <person name="Clark A.G."/>
            <person name="Schaeffer S.W."/>
            <person name="Gelbart W.M."/>
            <person name="Weinstock G.M."/>
            <person name="Gibbs R.A."/>
        </authorList>
    </citation>
    <scope>NUCLEOTIDE SEQUENCE [LARGE SCALE GENOMIC DNA]</scope>
    <source>
        <strain>MV2-25 / Tucson 14011-0121.94</strain>
    </source>
</reference>
<evidence type="ECO:0000250" key="1"/>
<evidence type="ECO:0000255" key="2">
    <source>
        <dbReference type="PROSITE-ProRule" id="PRU00154"/>
    </source>
</evidence>
<evidence type="ECO:0000255" key="3">
    <source>
        <dbReference type="PROSITE-ProRule" id="PRU00159"/>
    </source>
</evidence>
<evidence type="ECO:0000255" key="4">
    <source>
        <dbReference type="PROSITE-ProRule" id="PRU01328"/>
    </source>
</evidence>
<evidence type="ECO:0000255" key="5">
    <source>
        <dbReference type="PROSITE-ProRule" id="PRU01329"/>
    </source>
</evidence>
<evidence type="ECO:0000256" key="6">
    <source>
        <dbReference type="SAM" id="MobiDB-lite"/>
    </source>
</evidence>
<dbReference type="EC" id="2.7.11.21"/>
<dbReference type="EMBL" id="CH379069">
    <property type="protein sequence ID" value="EAL29859.1"/>
    <property type="molecule type" value="Genomic_DNA"/>
</dbReference>
<dbReference type="RefSeq" id="XP_001354120.1">
    <property type="nucleotide sequence ID" value="XM_001354084.3"/>
</dbReference>
<dbReference type="SMR" id="Q2LYK3"/>
<dbReference type="FunCoup" id="Q2LYK3">
    <property type="interactions" value="354"/>
</dbReference>
<dbReference type="STRING" id="46245.Q2LYK3"/>
<dbReference type="EnsemblMetazoa" id="FBtr0277154">
    <property type="protein sequence ID" value="FBpp0275592"/>
    <property type="gene ID" value="FBgn0080161"/>
</dbReference>
<dbReference type="GeneID" id="4813961"/>
<dbReference type="KEGG" id="dpo:4813961"/>
<dbReference type="CTD" id="40384"/>
<dbReference type="eggNOG" id="KOG0575">
    <property type="taxonomic scope" value="Eukaryota"/>
</dbReference>
<dbReference type="HOGENOM" id="CLU_008726_2_0_1"/>
<dbReference type="InParanoid" id="Q2LYK3"/>
<dbReference type="OMA" id="LPSKHWK"/>
<dbReference type="PhylomeDB" id="Q2LYK3"/>
<dbReference type="ChiTaRS" id="SAK">
    <property type="organism name" value="fly"/>
</dbReference>
<dbReference type="Proteomes" id="UP000001819">
    <property type="component" value="Chromosome X"/>
</dbReference>
<dbReference type="Bgee" id="FBgn0080161">
    <property type="expression patterns" value="Expressed in female reproductive system and 2 other cell types or tissues"/>
</dbReference>
<dbReference type="GO" id="GO:0005814">
    <property type="term" value="C:centriole"/>
    <property type="evidence" value="ECO:0007669"/>
    <property type="project" value="UniProtKB-SubCell"/>
</dbReference>
<dbReference type="GO" id="GO:0005737">
    <property type="term" value="C:cytoplasm"/>
    <property type="evidence" value="ECO:0007669"/>
    <property type="project" value="UniProtKB-KW"/>
</dbReference>
<dbReference type="GO" id="GO:0005634">
    <property type="term" value="C:nucleus"/>
    <property type="evidence" value="ECO:0007669"/>
    <property type="project" value="TreeGrafter"/>
</dbReference>
<dbReference type="GO" id="GO:0005524">
    <property type="term" value="F:ATP binding"/>
    <property type="evidence" value="ECO:0007669"/>
    <property type="project" value="UniProtKB-KW"/>
</dbReference>
<dbReference type="GO" id="GO:0106310">
    <property type="term" value="F:protein serine kinase activity"/>
    <property type="evidence" value="ECO:0007669"/>
    <property type="project" value="RHEA"/>
</dbReference>
<dbReference type="GO" id="GO:0004674">
    <property type="term" value="F:protein serine/threonine kinase activity"/>
    <property type="evidence" value="ECO:0007669"/>
    <property type="project" value="UniProtKB-KW"/>
</dbReference>
<dbReference type="CDD" id="cd13114">
    <property type="entry name" value="POLO_box_Plk4_1"/>
    <property type="match status" value="1"/>
</dbReference>
<dbReference type="CDD" id="cd13116">
    <property type="entry name" value="POLO_box_Plk4_3"/>
    <property type="match status" value="1"/>
</dbReference>
<dbReference type="FunFam" id="3.30.200.20:FF:000042">
    <property type="entry name" value="Aurora kinase A"/>
    <property type="match status" value="1"/>
</dbReference>
<dbReference type="FunFam" id="1.10.510.10:FF:000576">
    <property type="entry name" value="Serine/threonine-protein kinase PLK4"/>
    <property type="match status" value="1"/>
</dbReference>
<dbReference type="FunFam" id="3.30.1120.130:FF:000002">
    <property type="entry name" value="Serine/threonine-protein kinase PLK4"/>
    <property type="match status" value="1"/>
</dbReference>
<dbReference type="FunFam" id="3.30.1120.120:FF:000001">
    <property type="entry name" value="serine/threonine-protein kinase PLK4 isoform X2"/>
    <property type="match status" value="1"/>
</dbReference>
<dbReference type="Gene3D" id="2.40.50.930">
    <property type="match status" value="1"/>
</dbReference>
<dbReference type="Gene3D" id="3.30.1120.120">
    <property type="match status" value="1"/>
</dbReference>
<dbReference type="Gene3D" id="3.30.1120.130">
    <property type="match status" value="1"/>
</dbReference>
<dbReference type="Gene3D" id="1.10.510.10">
    <property type="entry name" value="Transferase(Phosphotransferase) domain 1"/>
    <property type="match status" value="1"/>
</dbReference>
<dbReference type="InterPro" id="IPR011009">
    <property type="entry name" value="Kinase-like_dom_sf"/>
</dbReference>
<dbReference type="InterPro" id="IPR047108">
    <property type="entry name" value="Plk4-like_POLO_box_2_sf"/>
</dbReference>
<dbReference type="InterPro" id="IPR000959">
    <property type="entry name" value="POLO_box_dom"/>
</dbReference>
<dbReference type="InterPro" id="IPR033699">
    <property type="entry name" value="POLO_box_Plk4_1"/>
</dbReference>
<dbReference type="InterPro" id="IPR033698">
    <property type="entry name" value="POLO_box_Plk4_2"/>
</dbReference>
<dbReference type="InterPro" id="IPR033696">
    <property type="entry name" value="POLO_box_Plk4_C"/>
</dbReference>
<dbReference type="InterPro" id="IPR000719">
    <property type="entry name" value="Prot_kinase_dom"/>
</dbReference>
<dbReference type="InterPro" id="IPR017441">
    <property type="entry name" value="Protein_kinase_ATP_BS"/>
</dbReference>
<dbReference type="InterPro" id="IPR046437">
    <property type="entry name" value="Ser_Thr-PK_POLO_box_1_sf"/>
</dbReference>
<dbReference type="InterPro" id="IPR008266">
    <property type="entry name" value="Tyr_kinase_AS"/>
</dbReference>
<dbReference type="PANTHER" id="PTHR24345">
    <property type="entry name" value="SERINE/THREONINE-PROTEIN KINASE PLK"/>
    <property type="match status" value="1"/>
</dbReference>
<dbReference type="PANTHER" id="PTHR24345:SF91">
    <property type="entry name" value="SERINE_THREONINE-PROTEIN KINASE PLK4"/>
    <property type="match status" value="1"/>
</dbReference>
<dbReference type="Pfam" id="PF00069">
    <property type="entry name" value="Pkinase"/>
    <property type="match status" value="1"/>
</dbReference>
<dbReference type="Pfam" id="PF18190">
    <property type="entry name" value="Plk4_PB1"/>
    <property type="match status" value="1"/>
</dbReference>
<dbReference type="Pfam" id="PF18409">
    <property type="entry name" value="Plk4_PB2"/>
    <property type="match status" value="1"/>
</dbReference>
<dbReference type="SUPFAM" id="SSF82615">
    <property type="entry name" value="Polo-box domain"/>
    <property type="match status" value="1"/>
</dbReference>
<dbReference type="SUPFAM" id="SSF56112">
    <property type="entry name" value="Protein kinase-like (PK-like)"/>
    <property type="match status" value="1"/>
</dbReference>
<dbReference type="PROSITE" id="PS51984">
    <property type="entry name" value="CPB1"/>
    <property type="match status" value="1"/>
</dbReference>
<dbReference type="PROSITE" id="PS51985">
    <property type="entry name" value="CPB2"/>
    <property type="match status" value="1"/>
</dbReference>
<dbReference type="PROSITE" id="PS50078">
    <property type="entry name" value="POLO_BOX"/>
    <property type="match status" value="1"/>
</dbReference>
<dbReference type="PROSITE" id="PS00107">
    <property type="entry name" value="PROTEIN_KINASE_ATP"/>
    <property type="match status" value="1"/>
</dbReference>
<dbReference type="PROSITE" id="PS50011">
    <property type="entry name" value="PROTEIN_KINASE_DOM"/>
    <property type="match status" value="1"/>
</dbReference>
<sequence>MMSTRTFGETIEEYEVQHLLGKGGFASVYKARCLHSHQDVAIKMIDKKLIQGTGLTSRVRQEVEIHSRLKHPSVLQLYTFFQDVNYVYLVLELAHNGELQRYMKQHLLRPFTESEGATILRQVVAGLLYLHSHNIMHRDISLSNLLLSKEMHIKIADFGLATQLKRPDERHMTMCGTPNYISPEVVSRLSHGLPADVWSVGCMLYTLLVGRPPFETEGVESTLNKVVMSEFMMPSHLSFEAQDLIHKLLKKSPHERITLEQVLRHPFLKRTVGGSSYSTTPGALNEFSQSLASSDSGIVTFASSDSRKSHRLRSVDNSSGQSMPQIMEEYLPSSNLGYDSKEHRPVYEQHGSYLPTPGDQLENRDAKWPGTNNLAPFTSDSDMIPSPVGEKRLLMPPLETKRLQPTRYKTKNAIMSILRTGEVVLEFVKFKVKYNEDRITDICRISEDGRRIIIYQPDPGRGLPIREHPPDPLIPSENCVYNYENLPNKHWKKYVYAARFVGLVKSKTPKITFFSSLGKCQLMETMTDFEVRFYSGAKLLKSSTDGVKVFNSNGAVLSDNGCAEARNLIDHGNECFSHCVNISNALELAQTKENTCFPVTIGRRPAADMHAGQRFDGLRDTTNFAYSTPKSNQGSINFSVSTISTTRSASDYNSNTPRLNMLAAHQNVPIKRITVPEIGIVTELSHGVVQVQFYDGSMVSVIPKVQGGGITYTQANGLSTHFGNNDDLPFAVRDRINQMPQLQMKLKCAPLLGNARSVDCHLMTPKTTTPFYNRMII</sequence>
<name>PLK4_DROPS</name>
<feature type="chain" id="PRO_0000385294" description="Serine/threonine-protein kinase PLK4">
    <location>
        <begin position="1"/>
        <end position="777"/>
    </location>
</feature>
<feature type="domain" description="Protein kinase" evidence="3">
    <location>
        <begin position="14"/>
        <end position="268"/>
    </location>
</feature>
<feature type="domain" description="Cryptic POLO box 1 (CPB1)" evidence="4">
    <location>
        <begin position="390"/>
        <end position="507"/>
    </location>
</feature>
<feature type="domain" description="Cryptic POLO box 2 (CPB2)" evidence="5">
    <location>
        <begin position="508"/>
        <end position="611"/>
    </location>
</feature>
<feature type="domain" description="POLO box" evidence="2">
    <location>
        <begin position="669"/>
        <end position="748"/>
    </location>
</feature>
<feature type="region of interest" description="Disordered" evidence="6">
    <location>
        <begin position="371"/>
        <end position="390"/>
    </location>
</feature>
<feature type="compositionally biased region" description="Polar residues" evidence="6">
    <location>
        <begin position="371"/>
        <end position="381"/>
    </location>
</feature>
<feature type="active site" description="Proton acceptor" evidence="3">
    <location>
        <position position="139"/>
    </location>
</feature>
<feature type="binding site" evidence="3">
    <location>
        <begin position="20"/>
        <end position="28"/>
    </location>
    <ligand>
        <name>ATP</name>
        <dbReference type="ChEBI" id="CHEBI:30616"/>
    </ligand>
</feature>
<feature type="binding site" evidence="3">
    <location>
        <position position="43"/>
    </location>
    <ligand>
        <name>ATP</name>
        <dbReference type="ChEBI" id="CHEBI:30616"/>
    </ligand>
</feature>